<proteinExistence type="evidence at protein level"/>
<dbReference type="EMBL" id="M11250">
    <property type="protein sequence ID" value="AAA22353.1"/>
    <property type="molecule type" value="Genomic_DNA"/>
</dbReference>
<dbReference type="EMBL" id="Y09663">
    <property type="protein sequence ID" value="CAA70856.1"/>
    <property type="molecule type" value="mRNA"/>
</dbReference>
<dbReference type="EMBL" id="J01554">
    <property type="status" value="NOT_ANNOTATED_CDS"/>
    <property type="molecule type" value="Genomic_DNA"/>
</dbReference>
<dbReference type="PIR" id="A22617">
    <property type="entry name" value="A22617"/>
</dbReference>
<dbReference type="PDB" id="1CIY">
    <property type="method" value="X-ray"/>
    <property type="resolution" value="2.25 A"/>
    <property type="chains" value="A=29-618"/>
</dbReference>
<dbReference type="PDBsum" id="1CIY"/>
<dbReference type="SMR" id="P0A366"/>
<dbReference type="IntAct" id="P0A366">
    <property type="interactions" value="1"/>
</dbReference>
<dbReference type="MINT" id="P0A366"/>
<dbReference type="EvolutionaryTrace" id="P0A366"/>
<dbReference type="GO" id="GO:0005102">
    <property type="term" value="F:signaling receptor binding"/>
    <property type="evidence" value="ECO:0007669"/>
    <property type="project" value="InterPro"/>
</dbReference>
<dbReference type="GO" id="GO:0090729">
    <property type="term" value="F:toxin activity"/>
    <property type="evidence" value="ECO:0007669"/>
    <property type="project" value="UniProtKB-KW"/>
</dbReference>
<dbReference type="GO" id="GO:0030435">
    <property type="term" value="P:sporulation resulting in formation of a cellular spore"/>
    <property type="evidence" value="ECO:0007669"/>
    <property type="project" value="UniProtKB-KW"/>
</dbReference>
<dbReference type="GO" id="GO:0001907">
    <property type="term" value="P:symbiont-mediated killing of host cell"/>
    <property type="evidence" value="ECO:0007669"/>
    <property type="project" value="InterPro"/>
</dbReference>
<dbReference type="CDD" id="cd04085">
    <property type="entry name" value="delta_endotoxin_C"/>
    <property type="match status" value="1"/>
</dbReference>
<dbReference type="Gene3D" id="2.60.120.260">
    <property type="entry name" value="Galactose-binding domain-like"/>
    <property type="match status" value="2"/>
</dbReference>
<dbReference type="Gene3D" id="2.100.10.10">
    <property type="entry name" value="Pesticidal crystal protein, central domain"/>
    <property type="match status" value="1"/>
</dbReference>
<dbReference type="Gene3D" id="1.20.190.10">
    <property type="entry name" value="Pesticidal crystal protein, N-terminal domain"/>
    <property type="match status" value="1"/>
</dbReference>
<dbReference type="InterPro" id="IPR048645">
    <property type="entry name" value="Cry1Ac-like_dom-VII"/>
</dbReference>
<dbReference type="InterPro" id="IPR041587">
    <property type="entry name" value="Cry_V"/>
</dbReference>
<dbReference type="InterPro" id="IPR008979">
    <property type="entry name" value="Galactose-bd-like_sf"/>
</dbReference>
<dbReference type="InterPro" id="IPR038979">
    <property type="entry name" value="Pest_crys"/>
</dbReference>
<dbReference type="InterPro" id="IPR054544">
    <property type="entry name" value="Pest_crys_Cry1Aa_dom-IV"/>
</dbReference>
<dbReference type="InterPro" id="IPR005638">
    <property type="entry name" value="Pest_crys_dom-III"/>
</dbReference>
<dbReference type="InterPro" id="IPR005639">
    <property type="entry name" value="Pest_crys_dom_I"/>
</dbReference>
<dbReference type="InterPro" id="IPR036716">
    <property type="entry name" value="Pest_crys_N_sf"/>
</dbReference>
<dbReference type="InterPro" id="IPR036399">
    <property type="entry name" value="Pest_cryst_cen_dom_sf"/>
</dbReference>
<dbReference type="InterPro" id="IPR001178">
    <property type="entry name" value="Pest_cryst_dom_II"/>
</dbReference>
<dbReference type="PANTHER" id="PTHR37003">
    <property type="entry name" value="ENDOTOXIN_N DOMAIN-CONTAINING PROTEIN-RELATED"/>
    <property type="match status" value="1"/>
</dbReference>
<dbReference type="PANTHER" id="PTHR37003:SF2">
    <property type="entry name" value="PESTICIDAL CRYSTAL PROTEIN N-TERMINAL DOMAIN-CONTAINING PROTEIN"/>
    <property type="match status" value="1"/>
</dbReference>
<dbReference type="Pfam" id="PF17997">
    <property type="entry name" value="Cry1Ac_D5"/>
    <property type="match status" value="1"/>
</dbReference>
<dbReference type="Pfam" id="PF21463">
    <property type="entry name" value="Cry1Ac_dom-VII"/>
    <property type="match status" value="1"/>
</dbReference>
<dbReference type="Pfam" id="PF03944">
    <property type="entry name" value="Endotoxin_C"/>
    <property type="match status" value="1"/>
</dbReference>
<dbReference type="Pfam" id="PF18449">
    <property type="entry name" value="Endotoxin_C2"/>
    <property type="match status" value="1"/>
</dbReference>
<dbReference type="Pfam" id="PF00555">
    <property type="entry name" value="Endotoxin_M"/>
    <property type="match status" value="1"/>
</dbReference>
<dbReference type="Pfam" id="PF03945">
    <property type="entry name" value="Endotoxin_N"/>
    <property type="match status" value="1"/>
</dbReference>
<dbReference type="SUPFAM" id="SSF51096">
    <property type="entry name" value="delta-Endotoxin (insectocide), middle domain"/>
    <property type="match status" value="1"/>
</dbReference>
<dbReference type="SUPFAM" id="SSF56849">
    <property type="entry name" value="delta-Endotoxin (insectocide), N-terminal domain"/>
    <property type="match status" value="1"/>
</dbReference>
<dbReference type="SUPFAM" id="SSF49785">
    <property type="entry name" value="Galactose-binding domain-like"/>
    <property type="match status" value="1"/>
</dbReference>
<accession>P0A366</accession>
<accession>P02965</accession>
<accession>P09664</accession>
<accession>P09665</accession>
<accession>P16478</accession>
<accession>Q9RED5</accession>
<feature type="chain" id="PRO_0000174019" description="Pesticidal crystal protein Cry1Aa">
    <location>
        <begin position="1"/>
        <end position="1176"/>
    </location>
</feature>
<feature type="sequence variant" description="In strain: BNS3.">
    <original>P</original>
    <variation>L</variation>
    <location>
        <position position="77"/>
    </location>
</feature>
<feature type="sequence conflict" description="In Ref. 1; AAA22353." evidence="1" ref="1">
    <original>V</original>
    <variation>L</variation>
    <location>
        <position position="1009"/>
    </location>
</feature>
<feature type="helix" evidence="2">
    <location>
        <begin position="35"/>
        <end position="48"/>
    </location>
</feature>
<feature type="strand" evidence="2">
    <location>
        <begin position="51"/>
        <end position="53"/>
    </location>
</feature>
<feature type="helix" evidence="2">
    <location>
        <begin position="54"/>
        <end position="63"/>
    </location>
</feature>
<feature type="helix" evidence="2">
    <location>
        <begin position="70"/>
        <end position="84"/>
    </location>
</feature>
<feature type="helix" evidence="2">
    <location>
        <begin position="90"/>
        <end position="119"/>
    </location>
</feature>
<feature type="helix" evidence="2">
    <location>
        <begin position="124"/>
        <end position="144"/>
    </location>
</feature>
<feature type="helix" evidence="2">
    <location>
        <begin position="145"/>
        <end position="148"/>
    </location>
</feature>
<feature type="helix" evidence="2">
    <location>
        <begin position="154"/>
        <end position="178"/>
    </location>
</feature>
<feature type="helix" evidence="2">
    <location>
        <begin position="180"/>
        <end position="182"/>
    </location>
</feature>
<feature type="helix" evidence="2">
    <location>
        <begin position="186"/>
        <end position="218"/>
    </location>
</feature>
<feature type="helix" evidence="2">
    <location>
        <begin position="223"/>
        <end position="239"/>
    </location>
</feature>
<feature type="helix" evidence="2">
    <location>
        <begin position="241"/>
        <end position="244"/>
    </location>
</feature>
<feature type="helix" evidence="2">
    <location>
        <begin position="245"/>
        <end position="250"/>
    </location>
</feature>
<feature type="turn" evidence="2">
    <location>
        <begin position="252"/>
        <end position="254"/>
    </location>
</feature>
<feature type="strand" evidence="2">
    <location>
        <begin position="266"/>
        <end position="269"/>
    </location>
</feature>
<feature type="helix" evidence="2">
    <location>
        <begin position="271"/>
        <end position="274"/>
    </location>
</feature>
<feature type="helix" evidence="2">
    <location>
        <begin position="284"/>
        <end position="289"/>
    </location>
</feature>
<feature type="strand" evidence="2">
    <location>
        <begin position="298"/>
        <end position="310"/>
    </location>
</feature>
<feature type="strand" evidence="2">
    <location>
        <begin position="313"/>
        <end position="325"/>
    </location>
</feature>
<feature type="helix" evidence="2">
    <location>
        <begin position="326"/>
        <end position="328"/>
    </location>
</feature>
<feature type="strand" evidence="2">
    <location>
        <begin position="344"/>
        <end position="351"/>
    </location>
</feature>
<feature type="strand" evidence="2">
    <location>
        <begin position="357"/>
        <end position="367"/>
    </location>
</feature>
<feature type="strand" evidence="2">
    <location>
        <begin position="380"/>
        <end position="390"/>
    </location>
</feature>
<feature type="strand" evidence="2">
    <location>
        <begin position="393"/>
        <end position="395"/>
    </location>
</feature>
<feature type="strand" evidence="2">
    <location>
        <begin position="400"/>
        <end position="403"/>
    </location>
</feature>
<feature type="strand" evidence="2">
    <location>
        <begin position="407"/>
        <end position="409"/>
    </location>
</feature>
<feature type="helix" evidence="2">
    <location>
        <begin position="410"/>
        <end position="412"/>
    </location>
</feature>
<feature type="helix" evidence="2">
    <location>
        <begin position="423"/>
        <end position="426"/>
    </location>
</feature>
<feature type="strand" evidence="2">
    <location>
        <begin position="429"/>
        <end position="434"/>
    </location>
</feature>
<feature type="strand" evidence="2">
    <location>
        <begin position="444"/>
        <end position="449"/>
    </location>
</feature>
<feature type="strand" evidence="2">
    <location>
        <begin position="452"/>
        <end position="456"/>
    </location>
</feature>
<feature type="strand" evidence="2">
    <location>
        <begin position="467"/>
        <end position="474"/>
    </location>
</feature>
<feature type="helix" evidence="2">
    <location>
        <begin position="475"/>
        <end position="477"/>
    </location>
</feature>
<feature type="strand" evidence="2">
    <location>
        <begin position="479"/>
        <end position="481"/>
    </location>
</feature>
<feature type="strand" evidence="2">
    <location>
        <begin position="486"/>
        <end position="488"/>
    </location>
</feature>
<feature type="strand" evidence="2">
    <location>
        <begin position="492"/>
        <end position="496"/>
    </location>
</feature>
<feature type="strand" evidence="2">
    <location>
        <begin position="498"/>
        <end position="514"/>
    </location>
</feature>
<feature type="strand" evidence="2">
    <location>
        <begin position="522"/>
        <end position="532"/>
    </location>
</feature>
<feature type="strand" evidence="2">
    <location>
        <begin position="534"/>
        <end position="540"/>
    </location>
</feature>
<feature type="strand" evidence="2">
    <location>
        <begin position="543"/>
        <end position="550"/>
    </location>
</feature>
<feature type="helix" evidence="2">
    <location>
        <begin position="562"/>
        <end position="564"/>
    </location>
</feature>
<feature type="strand" evidence="2">
    <location>
        <begin position="566"/>
        <end position="569"/>
    </location>
</feature>
<feature type="strand" evidence="2">
    <location>
        <begin position="577"/>
        <end position="590"/>
    </location>
</feature>
<feature type="strand" evidence="2">
    <location>
        <begin position="596"/>
        <end position="605"/>
    </location>
</feature>
<gene>
    <name type="primary">cry1Aa</name>
    <name type="synonym">cry-1-1</name>
    <name type="synonym">cry1A(a)</name>
    <name type="synonym">cryA</name>
    <name type="synonym">crybns3-1</name>
    <name type="synonym">cryIA(a)</name>
    <name type="synonym">icp</name>
</gene>
<organism>
    <name type="scientific">Bacillus thuringiensis subsp. kurstaki</name>
    <dbReference type="NCBI Taxonomy" id="29339"/>
    <lineage>
        <taxon>Bacteria</taxon>
        <taxon>Bacillati</taxon>
        <taxon>Bacillota</taxon>
        <taxon>Bacilli</taxon>
        <taxon>Bacillales</taxon>
        <taxon>Bacillaceae</taxon>
        <taxon>Bacillus</taxon>
        <taxon>Bacillus cereus group</taxon>
    </lineage>
</organism>
<protein>
    <recommendedName>
        <fullName>Pesticidal crystal protein Cry1Aa</fullName>
    </recommendedName>
    <alternativeName>
        <fullName>133 kDa crystal protein</fullName>
    </alternativeName>
    <alternativeName>
        <fullName>Crystaline entomocidal protoxin</fullName>
    </alternativeName>
    <alternativeName>
        <fullName>Insecticidal delta-endotoxin CryIA(a)</fullName>
    </alternativeName>
</protein>
<name>CR1AA_BACTK</name>
<comment type="function">
    <text>Promotes colloidosmotic lysis by binding to the midgut epithelial cells of many lepidopteran larvae.</text>
</comment>
<comment type="interaction">
    <interactant intactId="EBI-7210432">
        <id>P0A366</id>
    </interactant>
    <interactant intactId="EBI-7210462">
        <id>Q9XY09</id>
        <label>btr175</label>
    </interactant>
    <organismsDiffer>true</organismsDiffer>
    <experiments>10</experiments>
</comment>
<comment type="developmental stage">
    <text>The crystal protein is produced during sporulation and is accumulated both as an inclusion and as part of the spore coat.</text>
</comment>
<comment type="miscellaneous">
    <text>Toxic segment of the protein is located in the N-terminus.</text>
</comment>
<comment type="similarity">
    <text evidence="1">Belongs to the delta endotoxin family.</text>
</comment>
<keyword id="KW-0002">3D-structure</keyword>
<keyword id="KW-0903">Direct protein sequencing</keyword>
<keyword id="KW-0749">Sporulation</keyword>
<keyword id="KW-0800">Toxin</keyword>
<keyword id="KW-0843">Virulence</keyword>
<evidence type="ECO:0000305" key="1"/>
<evidence type="ECO:0007829" key="2">
    <source>
        <dbReference type="PDB" id="1CIY"/>
    </source>
</evidence>
<reference key="1">
    <citation type="journal article" date="1985" name="J. Biol. Chem.">
        <title>The amino acid sequence of a crystal protein from Bacillus thuringiensis deduced from the DNA base sequence.</title>
        <authorList>
            <person name="Schnepf H.E."/>
            <person name="Wong H.C."/>
            <person name="Whiteley H.R."/>
        </authorList>
    </citation>
    <scope>NUCLEOTIDE SEQUENCE [GENOMIC DNA]</scope>
    <source>
        <strain>HD-1</strain>
    </source>
</reference>
<reference key="2">
    <citation type="journal article" date="1999" name="Biotechnol. Lett.">
        <title>Cloning and nucleotide sequence of a novel cry1Aa-type gene from Bacillus thuringiensis subsp.kurstaki.</title>
        <authorList>
            <person name="Tounsi S."/>
            <person name="J'Mal A."/>
            <person name="Zouari N."/>
            <person name="Jaoua S."/>
        </authorList>
    </citation>
    <scope>NUCLEOTIDE SEQUENCE [GENOMIC DNA]</scope>
    <source>
        <strain>BNS3</strain>
    </source>
</reference>
<reference key="3">
    <citation type="journal article" date="1983" name="J. Biol. Chem.">
        <title>Transcriptional and translational start sites for the Bacillus thuringiensis crystal protein gene.</title>
        <authorList>
            <person name="Wong H.C."/>
            <person name="Schnepf H.E."/>
            <person name="Whiteley H.R."/>
        </authorList>
    </citation>
    <scope>NUCLEOTIDE SEQUENCE [GENOMIC DNA] OF 1-333</scope>
    <scope>PROTEIN SEQUENCE OF 1-9</scope>
    <source>
        <strain>HD-1</strain>
    </source>
</reference>
<reference key="4">
    <citation type="journal article" date="1995" name="J. Mol. Biol.">
        <title>Bacillus thuringiensis CryIA(a) insecticidal toxin: crystal structure and channel formation.</title>
        <authorList>
            <person name="Grochulski P."/>
            <person name="Masson L."/>
            <person name="Borisova S."/>
            <person name="Pusztai-Carey M."/>
            <person name="Schwartz J.L."/>
            <person name="Brousseau R."/>
            <person name="Cygler M."/>
        </authorList>
    </citation>
    <scope>X-RAY CRYSTALLOGRAPHY (2.25 ANGSTROMS) OF 33-609</scope>
    <source>
        <strain>HD-1</strain>
    </source>
</reference>
<sequence>MDNNPNINECIPYNCLSNPEVEVLGGERIETGYTPIDISLSLTQFLLSEFVPGAGFVLGLVDIIWGIFGPSQWDAFPVQIEQLINQRIEEFARNQAISRLEGLSNLYQIYAESFREWEADPTNPALREEMRIQFNDMNSALTTAIPLLAVQNYQVPLLSVYVQAANLHLSVLRDVSVFGQRWGFDAATINSRYNDLTRLIGNYTDYAVRWYNTGLERVWGPDSRDWVRYNQFRRELTLTVLDIVALFSNYDSRRYPIRTVSQLTREIYTNPVLENFDGSFRGMAQRIEQNIRQPHLMDILNSITIYTDVHRGFNYWSGHQITASPVGFSGPEFAFPLFGNAGNAAPPVLVSLTGLGIFRTLSSPLYRRIILGSGPNNQELFVLDGTEFSFASLTTNLPSTIYRQRGTVDSLDVIPPQDNSVPPRAGFSHRLSHVTMLSQAAGAVYTLRAPTFSWQHRSAEFNNIIPSSQITQIPLTKSTNLGSGTSVVKGPGFTGGDILRRTSPGQISTLRVNITAPLSQRYRVRIRYASTTNLQFHTSIDGRPINQGNFSATMSSGSNLQSGSFRTVGFTTPFNFSNGSSVFTLSAHVFNSGNEVYIDRIEFVPAEVTFEAEYDLERAQKAVNELFTSSNQIGLKTDVTDYHIDQVSNLVECLSDEFCLDEKQELSEKVKHAKRLSDERNLLQDPNFRGINRQLDRGWRGSTDITIQGGDDVFKENYVTLLGTFDECYPTYLYQKIDESKLKAYTRYQLRGYIEDSQDLEIYLIRYNAKHETVNVPGTGSLWPLSAQSPIGKCGEPNRCAPHLEWNPDLDCSCRDGEKCAHHSHHFSLDIDVGCTDLNEDLGVWVIFKIKTQDGHARLGNLEFLEEKPLVGEALARVKRAEKKWRDKREKLEWETNIVYKEAKESVDALFVNSQYDQLQADTNIAMIHAADKRVHSIREAYLPELSVIPGVNAAIFEELEGRIFTAFSLYDARNVIKNGDFNNGLSCWNVKGHVDVEEQNNQRSVLVVPEWEAEVSQEVRVCPGRGYILRVTAYKEGYGEGCVTIHEIENNTDELKFSNCVEEEIYPNNTVTCNDYTVNQEEYGGAYTSRNRGYNEAPSVPADYASVYEEKSYTDGRRENPCEFNRGYRDYTPLPVGYVTKELEYFPETDKVWIEIGETEGTFIVDSVELLLMEE</sequence>